<proteinExistence type="evidence at protein level"/>
<keyword id="KW-0004">4Fe-4S</keyword>
<keyword id="KW-0007">Acetylation</keyword>
<keyword id="KW-0021">Allosteric enzyme</keyword>
<keyword id="KW-0315">Glutamine amidotransferase</keyword>
<keyword id="KW-0328">Glycosyltransferase</keyword>
<keyword id="KW-0408">Iron</keyword>
<keyword id="KW-0411">Iron-sulfur</keyword>
<keyword id="KW-0460">Magnesium</keyword>
<keyword id="KW-0479">Metal-binding</keyword>
<keyword id="KW-0658">Purine biosynthesis</keyword>
<keyword id="KW-1185">Reference proteome</keyword>
<keyword id="KW-0808">Transferase</keyword>
<comment type="function">
    <text evidence="2">Catalyzes the formation of phosphoribosylamine from phosphoribosylpyrophosphate (PRPP) and glutamine.</text>
</comment>
<comment type="catalytic activity">
    <reaction evidence="2">
        <text>5-phospho-beta-D-ribosylamine + L-glutamate + diphosphate = 5-phospho-alpha-D-ribose 1-diphosphate + L-glutamine + H2O</text>
        <dbReference type="Rhea" id="RHEA:14905"/>
        <dbReference type="ChEBI" id="CHEBI:15377"/>
        <dbReference type="ChEBI" id="CHEBI:29985"/>
        <dbReference type="ChEBI" id="CHEBI:33019"/>
        <dbReference type="ChEBI" id="CHEBI:58017"/>
        <dbReference type="ChEBI" id="CHEBI:58359"/>
        <dbReference type="ChEBI" id="CHEBI:58681"/>
        <dbReference type="EC" id="2.4.2.14"/>
    </reaction>
    <physiologicalReaction direction="right-to-left" evidence="2">
        <dbReference type="Rhea" id="RHEA:14907"/>
    </physiologicalReaction>
</comment>
<comment type="cofactor">
    <cofactor evidence="1">
        <name>Mg(2+)</name>
        <dbReference type="ChEBI" id="CHEBI:18420"/>
    </cofactor>
    <text evidence="1">Binds 1 Mg(2+) ion per subunit.</text>
</comment>
<comment type="cofactor">
    <cofactor evidence="1">
        <name>[4Fe-4S] cluster</name>
        <dbReference type="ChEBI" id="CHEBI:49883"/>
    </cofactor>
    <text evidence="1">Binds 1 [4Fe-4S] cluster per subunit.</text>
</comment>
<comment type="pathway">
    <text evidence="2">Purine metabolism; IMP biosynthesis via de novo pathway; N(1)-(5-phospho-D-ribosyl)glycinamide from 5-phospho-alpha-D-ribose 1-diphosphate: step 1/2.</text>
</comment>
<comment type="subunit">
    <text evidence="1">Homotetramer.</text>
</comment>
<comment type="similarity">
    <text evidence="5">In the C-terminal section; belongs to the purine/pyrimidine phosphoribosyltransferase family.</text>
</comment>
<sequence>MELEELGIREECGVFGCIASGDWPTQLDVPHVITLGLVGLQHRGQESAGIVTSDGSAVPKFRVHKGMGLVNHVFTEDNLKKLYDSNLGIGHTRYATTGKCELENCQPFVVETLHGKIAVAHNGELVNAARLRKKLLRQGIGLSTSSDSEMITQLLAYTPPQEKDDAPDWVARIKNLMKEAPAAYSLVIMHRDFIYAVRDPYGNRPLCIGRLMPVSDVNDKEKKSSETEGWVVSSESCSFLSIGARYCHEVKPGEIVEISRHGIRTLDIIPRSNGDPVAFCIFEYVYFARPDSMFEDQMVYTVRYRCGQQLAIEAPVEADLVSTVPESATPAALGYATKCGLPYVEVLCKNRYVGRTFIQPNMRLRQLGVAKKFGVLSDNFKGKRIVLIDDSIVRGNTISPIIKLLKESGAKEVHIRVASPPIKYPCFMGINIPTKEELIANKPEFDCLAEYLGANSVVYLSVEGLVSSVQQEIKFKKQKVKKHDIAIQENGNGLEYFEKTGHCTACLTGQYPVELEW</sequence>
<gene>
    <name evidence="6" type="primary">Ppat</name>
</gene>
<dbReference type="EC" id="2.4.2.14" evidence="2"/>
<dbReference type="EMBL" id="AK147750">
    <property type="protein sequence ID" value="BAE28114.1"/>
    <property type="molecule type" value="mRNA"/>
</dbReference>
<dbReference type="EMBL" id="AK160542">
    <property type="protein sequence ID" value="BAE35859.1"/>
    <property type="molecule type" value="mRNA"/>
</dbReference>
<dbReference type="EMBL" id="AK164506">
    <property type="protein sequence ID" value="BAE37815.1"/>
    <property type="molecule type" value="mRNA"/>
</dbReference>
<dbReference type="EMBL" id="AK167057">
    <property type="protein sequence ID" value="BAE39220.1"/>
    <property type="molecule type" value="mRNA"/>
</dbReference>
<dbReference type="EMBL" id="BC023841">
    <property type="protein sequence ID" value="AAH23841.1"/>
    <property type="molecule type" value="mRNA"/>
</dbReference>
<dbReference type="CCDS" id="CCDS51527.1"/>
<dbReference type="RefSeq" id="NP_742158.1">
    <property type="nucleotide sequence ID" value="NM_172146.2"/>
</dbReference>
<dbReference type="SMR" id="Q8CIH9"/>
<dbReference type="FunCoup" id="Q8CIH9">
    <property type="interactions" value="1450"/>
</dbReference>
<dbReference type="STRING" id="10090.ENSMUSP00000120632"/>
<dbReference type="MEROPS" id="C44.001"/>
<dbReference type="GlyGen" id="Q8CIH9">
    <property type="glycosylation" value="2 sites, 1 O-linked glycan (1 site)"/>
</dbReference>
<dbReference type="iPTMnet" id="Q8CIH9"/>
<dbReference type="PhosphoSitePlus" id="Q8CIH9"/>
<dbReference type="PaxDb" id="10090-ENSMUSP00000120632"/>
<dbReference type="PeptideAtlas" id="Q8CIH9"/>
<dbReference type="ProteomicsDB" id="334682"/>
<dbReference type="Antibodypedia" id="24019">
    <property type="antibodies" value="379 antibodies from 28 providers"/>
</dbReference>
<dbReference type="DNASU" id="231327"/>
<dbReference type="Ensembl" id="ENSMUST00000140076.2">
    <property type="protein sequence ID" value="ENSMUSP00000120632.2"/>
    <property type="gene ID" value="ENSMUSG00000029246.15"/>
</dbReference>
<dbReference type="GeneID" id="231327"/>
<dbReference type="KEGG" id="mmu:231327"/>
<dbReference type="UCSC" id="uc008xvl.2">
    <property type="organism name" value="mouse"/>
</dbReference>
<dbReference type="AGR" id="MGI:2387203"/>
<dbReference type="CTD" id="5471"/>
<dbReference type="MGI" id="MGI:2387203">
    <property type="gene designation" value="Ppat"/>
</dbReference>
<dbReference type="VEuPathDB" id="HostDB:ENSMUSG00000029246"/>
<dbReference type="eggNOG" id="KOG0572">
    <property type="taxonomic scope" value="Eukaryota"/>
</dbReference>
<dbReference type="GeneTree" id="ENSGT00390000003428"/>
<dbReference type="HOGENOM" id="CLU_022389_3_1_1"/>
<dbReference type="InParanoid" id="Q8CIH9"/>
<dbReference type="OMA" id="IRHFGVK"/>
<dbReference type="OrthoDB" id="191723at2759"/>
<dbReference type="PhylomeDB" id="Q8CIH9"/>
<dbReference type="TreeFam" id="TF106370"/>
<dbReference type="Reactome" id="R-MMU-73817">
    <property type="pathway name" value="Purine ribonucleoside monophosphate biosynthesis"/>
</dbReference>
<dbReference type="UniPathway" id="UPA00074">
    <property type="reaction ID" value="UER00124"/>
</dbReference>
<dbReference type="BioGRID-ORCS" id="231327">
    <property type="hits" value="24 hits in 81 CRISPR screens"/>
</dbReference>
<dbReference type="ChiTaRS" id="Ppat">
    <property type="organism name" value="mouse"/>
</dbReference>
<dbReference type="PRO" id="PR:Q8CIH9"/>
<dbReference type="Proteomes" id="UP000000589">
    <property type="component" value="Chromosome 5"/>
</dbReference>
<dbReference type="RNAct" id="Q8CIH9">
    <property type="molecule type" value="protein"/>
</dbReference>
<dbReference type="Bgee" id="ENSMUSG00000029246">
    <property type="expression patterns" value="Expressed in primitive streak and 247 other cell types or tissues"/>
</dbReference>
<dbReference type="ExpressionAtlas" id="Q8CIH9">
    <property type="expression patterns" value="baseline and differential"/>
</dbReference>
<dbReference type="GO" id="GO:0051539">
    <property type="term" value="F:4 iron, 4 sulfur cluster binding"/>
    <property type="evidence" value="ECO:0007669"/>
    <property type="project" value="UniProtKB-KW"/>
</dbReference>
<dbReference type="GO" id="GO:0004044">
    <property type="term" value="F:amidophosphoribosyltransferase activity"/>
    <property type="evidence" value="ECO:0000314"/>
    <property type="project" value="MGI"/>
</dbReference>
<dbReference type="GO" id="GO:0046872">
    <property type="term" value="F:metal ion binding"/>
    <property type="evidence" value="ECO:0007669"/>
    <property type="project" value="UniProtKB-KW"/>
</dbReference>
<dbReference type="GO" id="GO:0044208">
    <property type="term" value="P:'de novo' AMP biosynthetic process"/>
    <property type="evidence" value="ECO:0000314"/>
    <property type="project" value="MGI"/>
</dbReference>
<dbReference type="GO" id="GO:0006189">
    <property type="term" value="P:'de novo' IMP biosynthetic process"/>
    <property type="evidence" value="ECO:0000314"/>
    <property type="project" value="MGI"/>
</dbReference>
<dbReference type="GO" id="GO:0097294">
    <property type="term" value="P:'de novo' XMP biosynthetic process"/>
    <property type="evidence" value="ECO:0000314"/>
    <property type="project" value="MGI"/>
</dbReference>
<dbReference type="GO" id="GO:0006177">
    <property type="term" value="P:GMP biosynthetic process"/>
    <property type="evidence" value="ECO:0000314"/>
    <property type="project" value="MGI"/>
</dbReference>
<dbReference type="GO" id="GO:0009113">
    <property type="term" value="P:purine nucleobase biosynthetic process"/>
    <property type="evidence" value="ECO:0007669"/>
    <property type="project" value="InterPro"/>
</dbReference>
<dbReference type="CDD" id="cd00715">
    <property type="entry name" value="GPATase_N"/>
    <property type="match status" value="1"/>
</dbReference>
<dbReference type="CDD" id="cd06223">
    <property type="entry name" value="PRTases_typeI"/>
    <property type="match status" value="1"/>
</dbReference>
<dbReference type="FunFam" id="3.60.20.10:FF:000047">
    <property type="entry name" value="Amidophosphoribosyltransferase"/>
    <property type="match status" value="1"/>
</dbReference>
<dbReference type="Gene3D" id="3.40.50.2020">
    <property type="match status" value="1"/>
</dbReference>
<dbReference type="Gene3D" id="3.60.20.10">
    <property type="entry name" value="Glutamine Phosphoribosylpyrophosphate, subunit 1, domain 1"/>
    <property type="match status" value="1"/>
</dbReference>
<dbReference type="HAMAP" id="MF_01931">
    <property type="entry name" value="PurF"/>
    <property type="match status" value="1"/>
</dbReference>
<dbReference type="InterPro" id="IPR017932">
    <property type="entry name" value="GATase_2_dom"/>
</dbReference>
<dbReference type="InterPro" id="IPR029055">
    <property type="entry name" value="Ntn_hydrolases_N"/>
</dbReference>
<dbReference type="InterPro" id="IPR000836">
    <property type="entry name" value="PRibTrfase_dom"/>
</dbReference>
<dbReference type="InterPro" id="IPR029057">
    <property type="entry name" value="PRTase-like"/>
</dbReference>
<dbReference type="InterPro" id="IPR005854">
    <property type="entry name" value="PurF"/>
</dbReference>
<dbReference type="InterPro" id="IPR035584">
    <property type="entry name" value="PurF_N"/>
</dbReference>
<dbReference type="NCBIfam" id="TIGR01134">
    <property type="entry name" value="purF"/>
    <property type="match status" value="1"/>
</dbReference>
<dbReference type="PANTHER" id="PTHR11907">
    <property type="entry name" value="AMIDOPHOSPHORIBOSYLTRANSFERASE"/>
    <property type="match status" value="1"/>
</dbReference>
<dbReference type="Pfam" id="PF13522">
    <property type="entry name" value="GATase_6"/>
    <property type="match status" value="1"/>
</dbReference>
<dbReference type="PIRSF" id="PIRSF000485">
    <property type="entry name" value="Amd_phspho_trans"/>
    <property type="match status" value="1"/>
</dbReference>
<dbReference type="SUPFAM" id="SSF56235">
    <property type="entry name" value="N-terminal nucleophile aminohydrolases (Ntn hydrolases)"/>
    <property type="match status" value="1"/>
</dbReference>
<dbReference type="SUPFAM" id="SSF53271">
    <property type="entry name" value="PRTase-like"/>
    <property type="match status" value="1"/>
</dbReference>
<dbReference type="PROSITE" id="PS51278">
    <property type="entry name" value="GATASE_TYPE_2"/>
    <property type="match status" value="1"/>
</dbReference>
<dbReference type="PROSITE" id="PS00103">
    <property type="entry name" value="PUR_PYR_PR_TRANSFER"/>
    <property type="match status" value="1"/>
</dbReference>
<organism>
    <name type="scientific">Mus musculus</name>
    <name type="common">Mouse</name>
    <dbReference type="NCBI Taxonomy" id="10090"/>
    <lineage>
        <taxon>Eukaryota</taxon>
        <taxon>Metazoa</taxon>
        <taxon>Chordata</taxon>
        <taxon>Craniata</taxon>
        <taxon>Vertebrata</taxon>
        <taxon>Euteleostomi</taxon>
        <taxon>Mammalia</taxon>
        <taxon>Eutheria</taxon>
        <taxon>Euarchontoglires</taxon>
        <taxon>Glires</taxon>
        <taxon>Rodentia</taxon>
        <taxon>Myomorpha</taxon>
        <taxon>Muroidea</taxon>
        <taxon>Muridae</taxon>
        <taxon>Murinae</taxon>
        <taxon>Mus</taxon>
        <taxon>Mus</taxon>
    </lineage>
</organism>
<feature type="propeptide" id="PRO_0000455153" evidence="2">
    <location>
        <begin position="1"/>
        <end position="11"/>
    </location>
</feature>
<feature type="chain" id="PRO_0000455154" description="Amidophosphoribosyltransferase">
    <location>
        <begin position="12"/>
        <end position="517"/>
    </location>
</feature>
<feature type="domain" description="Glutamine amidotransferase type-2" evidence="4">
    <location>
        <begin position="12"/>
        <end position="261"/>
    </location>
</feature>
<feature type="active site" description="Nucleophile" evidence="4">
    <location>
        <position position="12"/>
    </location>
</feature>
<feature type="binding site" evidence="1">
    <location>
        <position position="280"/>
    </location>
    <ligand>
        <name>[4Fe-4S] cluster</name>
        <dbReference type="ChEBI" id="CHEBI:49883"/>
    </ligand>
</feature>
<feature type="binding site" evidence="1">
    <location>
        <position position="327"/>
    </location>
    <ligand>
        <name>Mg(2+)</name>
        <dbReference type="ChEBI" id="CHEBI:18420"/>
    </ligand>
</feature>
<feature type="binding site" evidence="1">
    <location>
        <position position="389"/>
    </location>
    <ligand>
        <name>Mg(2+)</name>
        <dbReference type="ChEBI" id="CHEBI:18420"/>
    </ligand>
</feature>
<feature type="binding site" evidence="1">
    <location>
        <position position="390"/>
    </location>
    <ligand>
        <name>Mg(2+)</name>
        <dbReference type="ChEBI" id="CHEBI:18420"/>
    </ligand>
</feature>
<feature type="binding site" evidence="1">
    <location>
        <position position="426"/>
    </location>
    <ligand>
        <name>[4Fe-4S] cluster</name>
        <dbReference type="ChEBI" id="CHEBI:49883"/>
    </ligand>
</feature>
<feature type="binding site" evidence="1">
    <location>
        <position position="503"/>
    </location>
    <ligand>
        <name>[4Fe-4S] cluster</name>
        <dbReference type="ChEBI" id="CHEBI:49883"/>
    </ligand>
</feature>
<feature type="binding site" evidence="1">
    <location>
        <position position="506"/>
    </location>
    <ligand>
        <name>[4Fe-4S] cluster</name>
        <dbReference type="ChEBI" id="CHEBI:49883"/>
    </ligand>
</feature>
<feature type="modified residue" description="N-acetylmethionine" evidence="3">
    <location>
        <position position="1"/>
    </location>
</feature>
<feature type="sequence conflict" description="In Ref. 1; BAE28114." evidence="5" ref="1">
    <original>QPNM</original>
    <variation>HPTL</variation>
    <location>
        <begin position="359"/>
        <end position="362"/>
    </location>
</feature>
<feature type="sequence conflict" description="In Ref. 1; BAE28114." evidence="5" ref="1">
    <original>L</original>
    <variation>S</variation>
    <location>
        <position position="376"/>
    </location>
</feature>
<feature type="sequence conflict" description="In Ref. 1; BAE35859." evidence="5" ref="1">
    <original>V</original>
    <variation>M</variation>
    <location>
        <position position="393"/>
    </location>
</feature>
<protein>
    <recommendedName>
        <fullName>Amidophosphoribosyltransferase</fullName>
        <shortName>ATase</shortName>
        <ecNumber evidence="2">2.4.2.14</ecNumber>
    </recommendedName>
    <alternativeName>
        <fullName>Glutamine phosphoribosylpyrophosphate amidotransferase</fullName>
        <shortName>GPAT</shortName>
    </alternativeName>
</protein>
<name>PUR1_MOUSE</name>
<reference key="1">
    <citation type="journal article" date="2005" name="Science">
        <title>The transcriptional landscape of the mammalian genome.</title>
        <authorList>
            <person name="Carninci P."/>
            <person name="Kasukawa T."/>
            <person name="Katayama S."/>
            <person name="Gough J."/>
            <person name="Frith M.C."/>
            <person name="Maeda N."/>
            <person name="Oyama R."/>
            <person name="Ravasi T."/>
            <person name="Lenhard B."/>
            <person name="Wells C."/>
            <person name="Kodzius R."/>
            <person name="Shimokawa K."/>
            <person name="Bajic V.B."/>
            <person name="Brenner S.E."/>
            <person name="Batalov S."/>
            <person name="Forrest A.R."/>
            <person name="Zavolan M."/>
            <person name="Davis M.J."/>
            <person name="Wilming L.G."/>
            <person name="Aidinis V."/>
            <person name="Allen J.E."/>
            <person name="Ambesi-Impiombato A."/>
            <person name="Apweiler R."/>
            <person name="Aturaliya R.N."/>
            <person name="Bailey T.L."/>
            <person name="Bansal M."/>
            <person name="Baxter L."/>
            <person name="Beisel K.W."/>
            <person name="Bersano T."/>
            <person name="Bono H."/>
            <person name="Chalk A.M."/>
            <person name="Chiu K.P."/>
            <person name="Choudhary V."/>
            <person name="Christoffels A."/>
            <person name="Clutterbuck D.R."/>
            <person name="Crowe M.L."/>
            <person name="Dalla E."/>
            <person name="Dalrymple B.P."/>
            <person name="de Bono B."/>
            <person name="Della Gatta G."/>
            <person name="di Bernardo D."/>
            <person name="Down T."/>
            <person name="Engstrom P."/>
            <person name="Fagiolini M."/>
            <person name="Faulkner G."/>
            <person name="Fletcher C.F."/>
            <person name="Fukushima T."/>
            <person name="Furuno M."/>
            <person name="Futaki S."/>
            <person name="Gariboldi M."/>
            <person name="Georgii-Hemming P."/>
            <person name="Gingeras T.R."/>
            <person name="Gojobori T."/>
            <person name="Green R.E."/>
            <person name="Gustincich S."/>
            <person name="Harbers M."/>
            <person name="Hayashi Y."/>
            <person name="Hensch T.K."/>
            <person name="Hirokawa N."/>
            <person name="Hill D."/>
            <person name="Huminiecki L."/>
            <person name="Iacono M."/>
            <person name="Ikeo K."/>
            <person name="Iwama A."/>
            <person name="Ishikawa T."/>
            <person name="Jakt M."/>
            <person name="Kanapin A."/>
            <person name="Katoh M."/>
            <person name="Kawasawa Y."/>
            <person name="Kelso J."/>
            <person name="Kitamura H."/>
            <person name="Kitano H."/>
            <person name="Kollias G."/>
            <person name="Krishnan S.P."/>
            <person name="Kruger A."/>
            <person name="Kummerfeld S.K."/>
            <person name="Kurochkin I.V."/>
            <person name="Lareau L.F."/>
            <person name="Lazarevic D."/>
            <person name="Lipovich L."/>
            <person name="Liu J."/>
            <person name="Liuni S."/>
            <person name="McWilliam S."/>
            <person name="Madan Babu M."/>
            <person name="Madera M."/>
            <person name="Marchionni L."/>
            <person name="Matsuda H."/>
            <person name="Matsuzawa S."/>
            <person name="Miki H."/>
            <person name="Mignone F."/>
            <person name="Miyake S."/>
            <person name="Morris K."/>
            <person name="Mottagui-Tabar S."/>
            <person name="Mulder N."/>
            <person name="Nakano N."/>
            <person name="Nakauchi H."/>
            <person name="Ng P."/>
            <person name="Nilsson R."/>
            <person name="Nishiguchi S."/>
            <person name="Nishikawa S."/>
            <person name="Nori F."/>
            <person name="Ohara O."/>
            <person name="Okazaki Y."/>
            <person name="Orlando V."/>
            <person name="Pang K.C."/>
            <person name="Pavan W.J."/>
            <person name="Pavesi G."/>
            <person name="Pesole G."/>
            <person name="Petrovsky N."/>
            <person name="Piazza S."/>
            <person name="Reed J."/>
            <person name="Reid J.F."/>
            <person name="Ring B.Z."/>
            <person name="Ringwald M."/>
            <person name="Rost B."/>
            <person name="Ruan Y."/>
            <person name="Salzberg S.L."/>
            <person name="Sandelin A."/>
            <person name="Schneider C."/>
            <person name="Schoenbach C."/>
            <person name="Sekiguchi K."/>
            <person name="Semple C.A."/>
            <person name="Seno S."/>
            <person name="Sessa L."/>
            <person name="Sheng Y."/>
            <person name="Shibata Y."/>
            <person name="Shimada H."/>
            <person name="Shimada K."/>
            <person name="Silva D."/>
            <person name="Sinclair B."/>
            <person name="Sperling S."/>
            <person name="Stupka E."/>
            <person name="Sugiura K."/>
            <person name="Sultana R."/>
            <person name="Takenaka Y."/>
            <person name="Taki K."/>
            <person name="Tammoja K."/>
            <person name="Tan S.L."/>
            <person name="Tang S."/>
            <person name="Taylor M.S."/>
            <person name="Tegner J."/>
            <person name="Teichmann S.A."/>
            <person name="Ueda H.R."/>
            <person name="van Nimwegen E."/>
            <person name="Verardo R."/>
            <person name="Wei C.L."/>
            <person name="Yagi K."/>
            <person name="Yamanishi H."/>
            <person name="Zabarovsky E."/>
            <person name="Zhu S."/>
            <person name="Zimmer A."/>
            <person name="Hide W."/>
            <person name="Bult C."/>
            <person name="Grimmond S.M."/>
            <person name="Teasdale R.D."/>
            <person name="Liu E.T."/>
            <person name="Brusic V."/>
            <person name="Quackenbush J."/>
            <person name="Wahlestedt C."/>
            <person name="Mattick J.S."/>
            <person name="Hume D.A."/>
            <person name="Kai C."/>
            <person name="Sasaki D."/>
            <person name="Tomaru Y."/>
            <person name="Fukuda S."/>
            <person name="Kanamori-Katayama M."/>
            <person name="Suzuki M."/>
            <person name="Aoki J."/>
            <person name="Arakawa T."/>
            <person name="Iida J."/>
            <person name="Imamura K."/>
            <person name="Itoh M."/>
            <person name="Kato T."/>
            <person name="Kawaji H."/>
            <person name="Kawagashira N."/>
            <person name="Kawashima T."/>
            <person name="Kojima M."/>
            <person name="Kondo S."/>
            <person name="Konno H."/>
            <person name="Nakano K."/>
            <person name="Ninomiya N."/>
            <person name="Nishio T."/>
            <person name="Okada M."/>
            <person name="Plessy C."/>
            <person name="Shibata K."/>
            <person name="Shiraki T."/>
            <person name="Suzuki S."/>
            <person name="Tagami M."/>
            <person name="Waki K."/>
            <person name="Watahiki A."/>
            <person name="Okamura-Oho Y."/>
            <person name="Suzuki H."/>
            <person name="Kawai J."/>
            <person name="Hayashizaki Y."/>
        </authorList>
    </citation>
    <scope>NUCLEOTIDE SEQUENCE [LARGE SCALE MRNA] OF 1-477</scope>
    <source>
        <strain>C57BL/6J</strain>
        <tissue>Heart</tissue>
    </source>
</reference>
<reference key="2">
    <citation type="journal article" date="2009" name="PLoS Biol.">
        <title>Lineage-specific biology revealed by a finished genome assembly of the mouse.</title>
        <authorList>
            <person name="Church D.M."/>
            <person name="Goodstadt L."/>
            <person name="Hillier L.W."/>
            <person name="Zody M.C."/>
            <person name="Goldstein S."/>
            <person name="She X."/>
            <person name="Bult C.J."/>
            <person name="Agarwala R."/>
            <person name="Cherry J.L."/>
            <person name="DiCuccio M."/>
            <person name="Hlavina W."/>
            <person name="Kapustin Y."/>
            <person name="Meric P."/>
            <person name="Maglott D."/>
            <person name="Birtle Z."/>
            <person name="Marques A.C."/>
            <person name="Graves T."/>
            <person name="Zhou S."/>
            <person name="Teague B."/>
            <person name="Potamousis K."/>
            <person name="Churas C."/>
            <person name="Place M."/>
            <person name="Herschleb J."/>
            <person name="Runnheim R."/>
            <person name="Forrest D."/>
            <person name="Amos-Landgraf J."/>
            <person name="Schwartz D.C."/>
            <person name="Cheng Z."/>
            <person name="Lindblad-Toh K."/>
            <person name="Eichler E.E."/>
            <person name="Ponting C.P."/>
        </authorList>
    </citation>
    <scope>NUCLEOTIDE SEQUENCE [LARGE SCALE GENOMIC DNA]</scope>
    <source>
        <strain>C57BL/6J</strain>
    </source>
</reference>
<reference key="3">
    <citation type="journal article" date="2004" name="Genome Res.">
        <title>The status, quality, and expansion of the NIH full-length cDNA project: the Mammalian Gene Collection (MGC).</title>
        <authorList>
            <consortium name="The MGC Project Team"/>
        </authorList>
    </citation>
    <scope>NUCLEOTIDE SEQUENCE [LARGE SCALE MRNA]</scope>
    <source>
        <strain>FVB/N</strain>
    </source>
</reference>
<reference key="4">
    <citation type="journal article" date="2010" name="Cell">
        <title>A tissue-specific atlas of mouse protein phosphorylation and expression.</title>
        <authorList>
            <person name="Huttlin E.L."/>
            <person name="Jedrychowski M.P."/>
            <person name="Elias J.E."/>
            <person name="Goswami T."/>
            <person name="Rad R."/>
            <person name="Beausoleil S.A."/>
            <person name="Villen J."/>
            <person name="Haas W."/>
            <person name="Sowa M.E."/>
            <person name="Gygi S.P."/>
        </authorList>
    </citation>
    <scope>IDENTIFICATION BY MASS SPECTROMETRY [LARGE SCALE ANALYSIS]</scope>
</reference>
<reference key="5">
    <citation type="journal article" date="2013" name="Mol. Cell">
        <title>SIRT5-mediated lysine desuccinylation impacts diverse metabolic pathways.</title>
        <authorList>
            <person name="Park J."/>
            <person name="Chen Y."/>
            <person name="Tishkoff D.X."/>
            <person name="Peng C."/>
            <person name="Tan M."/>
            <person name="Dai L."/>
            <person name="Xie Z."/>
            <person name="Zhang Y."/>
            <person name="Zwaans B.M."/>
            <person name="Skinner M.E."/>
            <person name="Lombard D.B."/>
            <person name="Zhao Y."/>
        </authorList>
    </citation>
    <scope>IDENTIFICATION BY MASS SPECTROMETRY [LARGE SCALE ANALYSIS]</scope>
</reference>
<accession>Q8CIH9</accession>
<accession>Q3TKC5</accession>
<accession>Q3TUW2</accession>
<accession>Q3UGU3</accession>
<evidence type="ECO:0000250" key="1">
    <source>
        <dbReference type="UniProtKB" id="P00497"/>
    </source>
</evidence>
<evidence type="ECO:0000250" key="2">
    <source>
        <dbReference type="UniProtKB" id="P35433"/>
    </source>
</evidence>
<evidence type="ECO:0000250" key="3">
    <source>
        <dbReference type="UniProtKB" id="Q06203"/>
    </source>
</evidence>
<evidence type="ECO:0000255" key="4">
    <source>
        <dbReference type="PROSITE-ProRule" id="PRU00609"/>
    </source>
</evidence>
<evidence type="ECO:0000305" key="5"/>
<evidence type="ECO:0000312" key="6">
    <source>
        <dbReference type="MGI" id="MGI:2387203"/>
    </source>
</evidence>